<name>C82A1_PEA</name>
<organism>
    <name type="scientific">Pisum sativum</name>
    <name type="common">Garden pea</name>
    <name type="synonym">Lathyrus oleraceus</name>
    <dbReference type="NCBI Taxonomy" id="3888"/>
    <lineage>
        <taxon>Eukaryota</taxon>
        <taxon>Viridiplantae</taxon>
        <taxon>Streptophyta</taxon>
        <taxon>Embryophyta</taxon>
        <taxon>Tracheophyta</taxon>
        <taxon>Spermatophyta</taxon>
        <taxon>Magnoliopsida</taxon>
        <taxon>eudicotyledons</taxon>
        <taxon>Gunneridae</taxon>
        <taxon>Pentapetalae</taxon>
        <taxon>rosids</taxon>
        <taxon>fabids</taxon>
        <taxon>Fabales</taxon>
        <taxon>Fabaceae</taxon>
        <taxon>Papilionoideae</taxon>
        <taxon>50 kb inversion clade</taxon>
        <taxon>NPAAA clade</taxon>
        <taxon>Hologalegina</taxon>
        <taxon>IRL clade</taxon>
        <taxon>Fabeae</taxon>
        <taxon>Pisum</taxon>
    </lineage>
</organism>
<reference key="1">
    <citation type="journal article" date="1996" name="Plant Physiol.">
        <title>Cloning of wound-induced cytochrome P450 monooxygenases expressed in pea.</title>
        <authorList>
            <person name="Frank M.R."/>
            <person name="Deyneka J.M."/>
            <person name="Schuler M.A."/>
        </authorList>
    </citation>
    <scope>NUCLEOTIDE SEQUENCE [MRNA]</scope>
    <source>
        <tissue>Stem</tissue>
    </source>
</reference>
<reference key="2">
    <citation type="submission" date="1999-05" db="EMBL/GenBank/DDBJ databases">
        <authorList>
            <person name="Frank M.R."/>
        </authorList>
    </citation>
    <scope>SEQUENCE REVISION TO 47-48; 127; 198-199; 304; 311; 333-335 AND 454</scope>
</reference>
<comment type="cofactor">
    <cofactor evidence="1">
        <name>heme</name>
        <dbReference type="ChEBI" id="CHEBI:30413"/>
    </cofactor>
</comment>
<comment type="subcellular location">
    <subcellularLocation>
        <location evidence="2">Membrane</location>
    </subcellularLocation>
</comment>
<comment type="induction">
    <text>By wounding.</text>
</comment>
<comment type="similarity">
    <text evidence="2">Belongs to the cytochrome P450 family.</text>
</comment>
<accession>Q43068</accession>
<protein>
    <recommendedName>
        <fullName>Cytochrome P450 82A1</fullName>
        <ecNumber>1.14.-.-</ecNumber>
    </recommendedName>
    <alternativeName>
        <fullName>CYPLXXXII</fullName>
    </alternativeName>
</protein>
<proteinExistence type="evidence at transcript level"/>
<feature type="chain" id="PRO_0000052162" description="Cytochrome P450 82A1">
    <location>
        <begin position="1" status="less than"/>
        <end position="544"/>
    </location>
</feature>
<feature type="binding site" description="axial binding residue" evidence="1">
    <location>
        <position position="481"/>
    </location>
    <ligand>
        <name>heme</name>
        <dbReference type="ChEBI" id="CHEBI:30413"/>
    </ligand>
    <ligandPart>
        <name>Fe</name>
        <dbReference type="ChEBI" id="CHEBI:18248"/>
    </ligandPart>
</feature>
<feature type="non-terminal residue">
    <location>
        <position position="1"/>
    </location>
</feature>
<sequence length="544" mass="62055">FVLNYLNTTTIAFISLISLLFFLFRFSKVSHTKEPPIISGSWPLLGHLPLMRNTQTPHKTLGALVDKYGPIFTIKLGATNALVLSNWELAKECFTKNDIVVSSRPKPVAVELMSYNQAFIGWAPYGAYWRQLRKIVTLEILSNRRIELLSHIRVSEVQTSIKELVNVWSNQISSQYGLLDDTKSSSTNDEPSTTDYVSVELKKWFAQLTLNMVLRMVVGKRCFGDVDVENKEEAKRFLENIRDFMRLIGTFTVGDGVPFLKWLDLGGHEKEMKKCAKKFDVMLNEWLEEHREKKGLGSEDKVVGERDFMDAMLLVLKDKPIEGFDVDTIIKATTLELILGGSDTTAGTLTWAMCLLLKHPHVLEKLKEELNTYIGKERCVNESDINKLVYLHAIIKETLRLYPPAPFSSPREFTEDCTIGGYHIKKGTRLMPNLWKIHRDPSVWPDPLEFKPERFLSTHKDVDVRGQNFELLPFGSGRRMCAGMSLGLHMVHYILANFLHSFEILNPSPESIDVTEVLEFVTTKATPLEVLVKPCLSFKCYESM</sequence>
<gene>
    <name type="primary">CYP82A1</name>
    <name type="synonym">CYP82</name>
</gene>
<keyword id="KW-0349">Heme</keyword>
<keyword id="KW-0408">Iron</keyword>
<keyword id="KW-0472">Membrane</keyword>
<keyword id="KW-0479">Metal-binding</keyword>
<keyword id="KW-0503">Monooxygenase</keyword>
<keyword id="KW-0560">Oxidoreductase</keyword>
<evidence type="ECO:0000250" key="1"/>
<evidence type="ECO:0000305" key="2"/>
<dbReference type="EC" id="1.14.-.-"/>
<dbReference type="EMBL" id="U29333">
    <property type="protein sequence ID" value="AAC49188.2"/>
    <property type="molecule type" value="mRNA"/>
</dbReference>
<dbReference type="PIR" id="T06523">
    <property type="entry name" value="T06523"/>
</dbReference>
<dbReference type="SMR" id="Q43068"/>
<dbReference type="GO" id="GO:0016020">
    <property type="term" value="C:membrane"/>
    <property type="evidence" value="ECO:0007669"/>
    <property type="project" value="UniProtKB-SubCell"/>
</dbReference>
<dbReference type="GO" id="GO:0020037">
    <property type="term" value="F:heme binding"/>
    <property type="evidence" value="ECO:0007669"/>
    <property type="project" value="InterPro"/>
</dbReference>
<dbReference type="GO" id="GO:0005506">
    <property type="term" value="F:iron ion binding"/>
    <property type="evidence" value="ECO:0007669"/>
    <property type="project" value="InterPro"/>
</dbReference>
<dbReference type="GO" id="GO:0004497">
    <property type="term" value="F:monooxygenase activity"/>
    <property type="evidence" value="ECO:0007669"/>
    <property type="project" value="UniProtKB-KW"/>
</dbReference>
<dbReference type="GO" id="GO:0016705">
    <property type="term" value="F:oxidoreductase activity, acting on paired donors, with incorporation or reduction of molecular oxygen"/>
    <property type="evidence" value="ECO:0007669"/>
    <property type="project" value="InterPro"/>
</dbReference>
<dbReference type="CDD" id="cd20654">
    <property type="entry name" value="CYP82"/>
    <property type="match status" value="1"/>
</dbReference>
<dbReference type="FunFam" id="1.10.630.10:FF:000026">
    <property type="entry name" value="Cytochrome P450 82C4"/>
    <property type="match status" value="1"/>
</dbReference>
<dbReference type="Gene3D" id="1.10.630.10">
    <property type="entry name" value="Cytochrome P450"/>
    <property type="match status" value="1"/>
</dbReference>
<dbReference type="InterPro" id="IPR001128">
    <property type="entry name" value="Cyt_P450"/>
</dbReference>
<dbReference type="InterPro" id="IPR017972">
    <property type="entry name" value="Cyt_P450_CS"/>
</dbReference>
<dbReference type="InterPro" id="IPR002401">
    <property type="entry name" value="Cyt_P450_E_grp-I"/>
</dbReference>
<dbReference type="InterPro" id="IPR036396">
    <property type="entry name" value="Cyt_P450_sf"/>
</dbReference>
<dbReference type="InterPro" id="IPR050651">
    <property type="entry name" value="Plant_Cytochrome_P450_Monoox"/>
</dbReference>
<dbReference type="PANTHER" id="PTHR47947:SF50">
    <property type="entry name" value="CYTOCHROME P450 82A3"/>
    <property type="match status" value="1"/>
</dbReference>
<dbReference type="PANTHER" id="PTHR47947">
    <property type="entry name" value="CYTOCHROME P450 82C3-RELATED"/>
    <property type="match status" value="1"/>
</dbReference>
<dbReference type="Pfam" id="PF00067">
    <property type="entry name" value="p450"/>
    <property type="match status" value="1"/>
</dbReference>
<dbReference type="PRINTS" id="PR00463">
    <property type="entry name" value="EP450I"/>
</dbReference>
<dbReference type="PRINTS" id="PR00385">
    <property type="entry name" value="P450"/>
</dbReference>
<dbReference type="SUPFAM" id="SSF48264">
    <property type="entry name" value="Cytochrome P450"/>
    <property type="match status" value="1"/>
</dbReference>
<dbReference type="PROSITE" id="PS00086">
    <property type="entry name" value="CYTOCHROME_P450"/>
    <property type="match status" value="1"/>
</dbReference>